<sequence length="62" mass="6950">MTIVPVNGTILVQQGNREFNKLYEASFPDTKEGNSAAYAWASSIAMGWEDCQDEDWNRNHAA</sequence>
<gene>
    <name type="primary">kil</name>
</gene>
<comment type="function">
    <text>P22 kil is essential for lytic growth in the absence of abc. Expression of P22 kil causes filamentation and cell death.</text>
</comment>
<keyword id="KW-1185">Reference proteome</keyword>
<organism>
    <name type="scientific">Salmonella phage P22</name>
    <name type="common">Bacteriophage P22</name>
    <dbReference type="NCBI Taxonomy" id="10754"/>
    <lineage>
        <taxon>Viruses</taxon>
        <taxon>Duplodnaviria</taxon>
        <taxon>Heunggongvirae</taxon>
        <taxon>Uroviricota</taxon>
        <taxon>Caudoviricetes</taxon>
        <taxon>Lederbergvirus</taxon>
    </lineage>
</organism>
<accession>P14111</accession>
<accession>Q7PCG0</accession>
<organismHost>
    <name type="scientific">Salmonella typhimurium</name>
    <dbReference type="NCBI Taxonomy" id="90371"/>
</organismHost>
<proteinExistence type="predicted"/>
<dbReference type="EMBL" id="X15637">
    <property type="protein sequence ID" value="CAA33654.1"/>
    <property type="molecule type" value="Genomic_DNA"/>
</dbReference>
<dbReference type="EMBL" id="AF217253">
    <property type="protein sequence ID" value="AAF75016.1"/>
    <property type="molecule type" value="Genomic_DNA"/>
</dbReference>
<dbReference type="EMBL" id="BK000583">
    <property type="protein sequence ID" value="DAA01013.1"/>
    <property type="molecule type" value="Genomic_DNA"/>
</dbReference>
<dbReference type="PIR" id="S04248">
    <property type="entry name" value="VDBP22"/>
</dbReference>
<dbReference type="RefSeq" id="NP_059598.1">
    <property type="nucleotide sequence ID" value="NC_002371.2"/>
</dbReference>
<dbReference type="SMR" id="P14111"/>
<dbReference type="GeneID" id="1262785"/>
<dbReference type="KEGG" id="vg:1262785"/>
<dbReference type="OrthoDB" id="22354at10239"/>
<dbReference type="Proteomes" id="UP000001795">
    <property type="component" value="Segment"/>
</dbReference>
<dbReference type="Proteomes" id="UP000007960">
    <property type="component" value="Segment"/>
</dbReference>
<dbReference type="InterPro" id="IPR020298">
    <property type="entry name" value="Kil_phage_P22-type"/>
</dbReference>
<dbReference type="Pfam" id="PF17519">
    <property type="entry name" value="DUF5444"/>
    <property type="match status" value="1"/>
</dbReference>
<feature type="chain" id="PRO_0000077651" description="Protein kil">
    <location>
        <begin position="1"/>
        <end position="62"/>
    </location>
</feature>
<reference key="1">
    <citation type="journal article" date="1989" name="J. Mol. Biol.">
        <title>Genetic structure of the bacteriophage P22 PL operon.</title>
        <authorList>
            <person name="Semerjian A.V."/>
            <person name="Malloy D.C."/>
            <person name="Poteete A.R."/>
        </authorList>
    </citation>
    <scope>NUCLEOTIDE SEQUENCE [GENOMIC DNA]</scope>
</reference>
<reference key="2">
    <citation type="journal article" date="2000" name="J. Bacteriol.">
        <title>Sequence of the genome of Salmonella bacteriophage P22.</title>
        <authorList>
            <person name="Vander Byl C.S."/>
            <person name="Kropinski A.M.B."/>
        </authorList>
    </citation>
    <scope>NUCLEOTIDE SEQUENCE [LARGE SCALE GENOMIC DNA]</scope>
</reference>
<reference key="3">
    <citation type="journal article" date="2003" name="J. Bacteriol.">
        <title>Corrected sequence of the bacteriophage P22 genome.</title>
        <authorList>
            <person name="Pedulla M.L."/>
            <person name="Ford M.E."/>
            <person name="Karthikeyan T."/>
            <person name="Houtz J.M."/>
            <person name="Hendrix R.W."/>
            <person name="Hatfull G.F."/>
            <person name="Poteete A.R."/>
            <person name="Gilcrease E.B."/>
            <person name="Winn-Stapley D.A."/>
            <person name="Casjens S.R."/>
        </authorList>
    </citation>
    <scope>NUCLEOTIDE SEQUENCE [LARGE SCALE GENOMIC DNA]</scope>
</reference>
<name>VKIL_BPP22</name>
<protein>
    <recommendedName>
        <fullName>Protein kil</fullName>
    </recommendedName>
</protein>